<proteinExistence type="inferred from homology"/>
<keyword id="KW-0255">Endonuclease</keyword>
<keyword id="KW-0378">Hydrolase</keyword>
<keyword id="KW-0540">Nuclease</keyword>
<keyword id="KW-0694">RNA-binding</keyword>
<keyword id="KW-0819">tRNA processing</keyword>
<evidence type="ECO:0000255" key="1">
    <source>
        <dbReference type="HAMAP-Rule" id="MF_00227"/>
    </source>
</evidence>
<accession>Q0AE58</accession>
<sequence length="121" mass="14272">MTTEHVYSLPKSCRLRKADEFRAVLRHRTVFESLSLRLHIKLKPINDGYARIGLIVAKKIERKAVRRNRIKRLIREAFRKHRQVVQGMDCVMQLRRSVEPSDSARIYQEAVTLLHKAARQL</sequence>
<gene>
    <name evidence="1" type="primary">rnpA</name>
    <name type="ordered locus">Neut_2152</name>
</gene>
<name>RNPA_NITEC</name>
<organism>
    <name type="scientific">Nitrosomonas eutropha (strain DSM 101675 / C91 / Nm57)</name>
    <dbReference type="NCBI Taxonomy" id="335283"/>
    <lineage>
        <taxon>Bacteria</taxon>
        <taxon>Pseudomonadati</taxon>
        <taxon>Pseudomonadota</taxon>
        <taxon>Betaproteobacteria</taxon>
        <taxon>Nitrosomonadales</taxon>
        <taxon>Nitrosomonadaceae</taxon>
        <taxon>Nitrosomonas</taxon>
    </lineage>
</organism>
<dbReference type="EC" id="3.1.26.5" evidence="1"/>
<dbReference type="EMBL" id="CP000450">
    <property type="protein sequence ID" value="ABI60374.1"/>
    <property type="molecule type" value="Genomic_DNA"/>
</dbReference>
<dbReference type="RefSeq" id="WP_011635171.1">
    <property type="nucleotide sequence ID" value="NC_008344.1"/>
</dbReference>
<dbReference type="SMR" id="Q0AE58"/>
<dbReference type="STRING" id="335283.Neut_2152"/>
<dbReference type="KEGG" id="net:Neut_2152"/>
<dbReference type="eggNOG" id="COG0594">
    <property type="taxonomic scope" value="Bacteria"/>
</dbReference>
<dbReference type="HOGENOM" id="CLU_117179_11_2_4"/>
<dbReference type="OrthoDB" id="398329at2"/>
<dbReference type="Proteomes" id="UP000001966">
    <property type="component" value="Chromosome"/>
</dbReference>
<dbReference type="GO" id="GO:0030677">
    <property type="term" value="C:ribonuclease P complex"/>
    <property type="evidence" value="ECO:0007669"/>
    <property type="project" value="TreeGrafter"/>
</dbReference>
<dbReference type="GO" id="GO:0042781">
    <property type="term" value="F:3'-tRNA processing endoribonuclease activity"/>
    <property type="evidence" value="ECO:0007669"/>
    <property type="project" value="TreeGrafter"/>
</dbReference>
<dbReference type="GO" id="GO:0004526">
    <property type="term" value="F:ribonuclease P activity"/>
    <property type="evidence" value="ECO:0007669"/>
    <property type="project" value="UniProtKB-UniRule"/>
</dbReference>
<dbReference type="GO" id="GO:0000049">
    <property type="term" value="F:tRNA binding"/>
    <property type="evidence" value="ECO:0007669"/>
    <property type="project" value="UniProtKB-UniRule"/>
</dbReference>
<dbReference type="GO" id="GO:0001682">
    <property type="term" value="P:tRNA 5'-leader removal"/>
    <property type="evidence" value="ECO:0007669"/>
    <property type="project" value="UniProtKB-UniRule"/>
</dbReference>
<dbReference type="Gene3D" id="3.30.230.10">
    <property type="match status" value="1"/>
</dbReference>
<dbReference type="HAMAP" id="MF_00227">
    <property type="entry name" value="RNase_P"/>
    <property type="match status" value="1"/>
</dbReference>
<dbReference type="InterPro" id="IPR020568">
    <property type="entry name" value="Ribosomal_Su5_D2-typ_SF"/>
</dbReference>
<dbReference type="InterPro" id="IPR014721">
    <property type="entry name" value="Ribsml_uS5_D2-typ_fold_subgr"/>
</dbReference>
<dbReference type="InterPro" id="IPR000100">
    <property type="entry name" value="RNase_P"/>
</dbReference>
<dbReference type="NCBIfam" id="TIGR00188">
    <property type="entry name" value="rnpA"/>
    <property type="match status" value="1"/>
</dbReference>
<dbReference type="PANTHER" id="PTHR33992">
    <property type="entry name" value="RIBONUCLEASE P PROTEIN COMPONENT"/>
    <property type="match status" value="1"/>
</dbReference>
<dbReference type="PANTHER" id="PTHR33992:SF1">
    <property type="entry name" value="RIBONUCLEASE P PROTEIN COMPONENT"/>
    <property type="match status" value="1"/>
</dbReference>
<dbReference type="Pfam" id="PF00825">
    <property type="entry name" value="Ribonuclease_P"/>
    <property type="match status" value="1"/>
</dbReference>
<dbReference type="SUPFAM" id="SSF54211">
    <property type="entry name" value="Ribosomal protein S5 domain 2-like"/>
    <property type="match status" value="1"/>
</dbReference>
<feature type="chain" id="PRO_1000021437" description="Ribonuclease P protein component">
    <location>
        <begin position="1"/>
        <end position="121"/>
    </location>
</feature>
<comment type="function">
    <text evidence="1">RNaseP catalyzes the removal of the 5'-leader sequence from pre-tRNA to produce the mature 5'-terminus. It can also cleave other RNA substrates such as 4.5S RNA. The protein component plays an auxiliary but essential role in vivo by binding to the 5'-leader sequence and broadening the substrate specificity of the ribozyme.</text>
</comment>
<comment type="catalytic activity">
    <reaction evidence="1">
        <text>Endonucleolytic cleavage of RNA, removing 5'-extranucleotides from tRNA precursor.</text>
        <dbReference type="EC" id="3.1.26.5"/>
    </reaction>
</comment>
<comment type="subunit">
    <text evidence="1">Consists of a catalytic RNA component (M1 or rnpB) and a protein subunit.</text>
</comment>
<comment type="similarity">
    <text evidence="1">Belongs to the RnpA family.</text>
</comment>
<reference key="1">
    <citation type="journal article" date="2007" name="Environ. Microbiol.">
        <title>Whole-genome analysis of the ammonia-oxidizing bacterium, Nitrosomonas eutropha C91: implications for niche adaptation.</title>
        <authorList>
            <person name="Stein L.Y."/>
            <person name="Arp D.J."/>
            <person name="Berube P.M."/>
            <person name="Chain P.S."/>
            <person name="Hauser L."/>
            <person name="Jetten M.S."/>
            <person name="Klotz M.G."/>
            <person name="Larimer F.W."/>
            <person name="Norton J.M."/>
            <person name="Op den Camp H.J.M."/>
            <person name="Shin M."/>
            <person name="Wei X."/>
        </authorList>
    </citation>
    <scope>NUCLEOTIDE SEQUENCE [LARGE SCALE GENOMIC DNA]</scope>
    <source>
        <strain>DSM 101675 / C91 / Nm57</strain>
    </source>
</reference>
<protein>
    <recommendedName>
        <fullName evidence="1">Ribonuclease P protein component</fullName>
        <shortName evidence="1">RNase P protein</shortName>
        <shortName evidence="1">RNaseP protein</shortName>
        <ecNumber evidence="1">3.1.26.5</ecNumber>
    </recommendedName>
    <alternativeName>
        <fullName evidence="1">Protein C5</fullName>
    </alternativeName>
</protein>